<accession>B1XCM6</accession>
<protein>
    <recommendedName>
        <fullName evidence="1">Regulatory protein RecX</fullName>
    </recommendedName>
</protein>
<evidence type="ECO:0000255" key="1">
    <source>
        <dbReference type="HAMAP-Rule" id="MF_01114"/>
    </source>
</evidence>
<sequence>MTESTSRRPAYARLLDRAVRILAVRDHSEQELRRKLAAPIMGKNGPEEIDATAEDYERVIAWCHEHGYLDDSRFVARFIASRSRKGYGPARIRQELNQKGISREATEKAMRECDIDWCALARDQATRKYGEPLPTVFSEKVKIQRFLLYRGYLMEDIQEIWRNFAD</sequence>
<keyword id="KW-0963">Cytoplasm</keyword>
<gene>
    <name evidence="1" type="primary">recX</name>
    <name type="ordered locus">ECDH10B_2866</name>
</gene>
<reference key="1">
    <citation type="journal article" date="2008" name="J. Bacteriol.">
        <title>The complete genome sequence of Escherichia coli DH10B: insights into the biology of a laboratory workhorse.</title>
        <authorList>
            <person name="Durfee T."/>
            <person name="Nelson R."/>
            <person name="Baldwin S."/>
            <person name="Plunkett G. III"/>
            <person name="Burland V."/>
            <person name="Mau B."/>
            <person name="Petrosino J.F."/>
            <person name="Qin X."/>
            <person name="Muzny D.M."/>
            <person name="Ayele M."/>
            <person name="Gibbs R.A."/>
            <person name="Csorgo B."/>
            <person name="Posfai G."/>
            <person name="Weinstock G.M."/>
            <person name="Blattner F.R."/>
        </authorList>
    </citation>
    <scope>NUCLEOTIDE SEQUENCE [LARGE SCALE GENOMIC DNA]</scope>
    <source>
        <strain>K12 / DH10B</strain>
    </source>
</reference>
<name>RECX_ECODH</name>
<dbReference type="EMBL" id="CP000948">
    <property type="protein sequence ID" value="ACB03817.1"/>
    <property type="molecule type" value="Genomic_DNA"/>
</dbReference>
<dbReference type="RefSeq" id="WP_000140508.1">
    <property type="nucleotide sequence ID" value="NC_010473.1"/>
</dbReference>
<dbReference type="SMR" id="B1XCM6"/>
<dbReference type="KEGG" id="ecd:ECDH10B_2866"/>
<dbReference type="HOGENOM" id="CLU_066607_3_2_6"/>
<dbReference type="GO" id="GO:0005737">
    <property type="term" value="C:cytoplasm"/>
    <property type="evidence" value="ECO:0007669"/>
    <property type="project" value="UniProtKB-SubCell"/>
</dbReference>
<dbReference type="GO" id="GO:0006282">
    <property type="term" value="P:regulation of DNA repair"/>
    <property type="evidence" value="ECO:0007669"/>
    <property type="project" value="UniProtKB-UniRule"/>
</dbReference>
<dbReference type="FunFam" id="1.10.10.10:FF:000133">
    <property type="entry name" value="Regulatory protein RecX"/>
    <property type="match status" value="1"/>
</dbReference>
<dbReference type="FunFam" id="1.10.10.10:FF:000134">
    <property type="entry name" value="Regulatory protein RecX"/>
    <property type="match status" value="1"/>
</dbReference>
<dbReference type="FunFam" id="1.10.10.10:FF:000209">
    <property type="entry name" value="Regulatory protein RecX"/>
    <property type="match status" value="1"/>
</dbReference>
<dbReference type="Gene3D" id="1.10.10.10">
    <property type="entry name" value="Winged helix-like DNA-binding domain superfamily/Winged helix DNA-binding domain"/>
    <property type="match status" value="3"/>
</dbReference>
<dbReference type="HAMAP" id="MF_01114">
    <property type="entry name" value="RecX"/>
    <property type="match status" value="1"/>
</dbReference>
<dbReference type="InterPro" id="IPR053926">
    <property type="entry name" value="RecX_HTH_1st"/>
</dbReference>
<dbReference type="InterPro" id="IPR053924">
    <property type="entry name" value="RecX_HTH_2nd"/>
</dbReference>
<dbReference type="InterPro" id="IPR053925">
    <property type="entry name" value="RecX_HTH_3rd"/>
</dbReference>
<dbReference type="InterPro" id="IPR003783">
    <property type="entry name" value="Regulatory_RecX"/>
</dbReference>
<dbReference type="InterPro" id="IPR036388">
    <property type="entry name" value="WH-like_DNA-bd_sf"/>
</dbReference>
<dbReference type="NCBIfam" id="NF001052">
    <property type="entry name" value="PRK00117.1-1"/>
    <property type="match status" value="1"/>
</dbReference>
<dbReference type="PANTHER" id="PTHR33602">
    <property type="entry name" value="REGULATORY PROTEIN RECX FAMILY PROTEIN"/>
    <property type="match status" value="1"/>
</dbReference>
<dbReference type="PANTHER" id="PTHR33602:SF1">
    <property type="entry name" value="REGULATORY PROTEIN RECX FAMILY PROTEIN"/>
    <property type="match status" value="1"/>
</dbReference>
<dbReference type="Pfam" id="PF21982">
    <property type="entry name" value="RecX_HTH1"/>
    <property type="match status" value="1"/>
</dbReference>
<dbReference type="Pfam" id="PF02631">
    <property type="entry name" value="RecX_HTH2"/>
    <property type="match status" value="1"/>
</dbReference>
<dbReference type="Pfam" id="PF21981">
    <property type="entry name" value="RecX_HTH3"/>
    <property type="match status" value="1"/>
</dbReference>
<proteinExistence type="inferred from homology"/>
<organism>
    <name type="scientific">Escherichia coli (strain K12 / DH10B)</name>
    <dbReference type="NCBI Taxonomy" id="316385"/>
    <lineage>
        <taxon>Bacteria</taxon>
        <taxon>Pseudomonadati</taxon>
        <taxon>Pseudomonadota</taxon>
        <taxon>Gammaproteobacteria</taxon>
        <taxon>Enterobacterales</taxon>
        <taxon>Enterobacteriaceae</taxon>
        <taxon>Escherichia</taxon>
    </lineage>
</organism>
<comment type="function">
    <text evidence="1">Modulates RecA activity.</text>
</comment>
<comment type="subcellular location">
    <subcellularLocation>
        <location evidence="1">Cytoplasm</location>
    </subcellularLocation>
</comment>
<comment type="similarity">
    <text evidence="1">Belongs to the RecX family.</text>
</comment>
<feature type="chain" id="PRO_1000137164" description="Regulatory protein RecX">
    <location>
        <begin position="1"/>
        <end position="166"/>
    </location>
</feature>